<reference key="1">
    <citation type="journal article" date="2004" name="Biochimie">
        <title>Analysis of Bothrops jararacussu venomous gland transcriptome focusing on structural and functional aspects: I -- gene expression profile of highly expressed phospholipases A2.</title>
        <authorList>
            <person name="Kashima S."/>
            <person name="Roberto P.G."/>
            <person name="Soares A.M."/>
            <person name="Astolfi-Filho S."/>
            <person name="Pereira J.O."/>
            <person name="Giuliati S."/>
            <person name="Faria M. Jr."/>
            <person name="Xavier M.A.S."/>
            <person name="Fontes M.R.M."/>
            <person name="Giglio J.R."/>
            <person name="Franca S.C."/>
        </authorList>
    </citation>
    <scope>NUCLEOTIDE SEQUENCE [MRNA]</scope>
    <source>
        <tissue>Venom gland</tissue>
    </source>
</reference>
<reference key="2">
    <citation type="submission" date="2003-05" db="EMBL/GenBank/DDBJ databases">
        <title>Bothrops jararacussu myotoxic phospholipase A2-like mRNA.</title>
        <authorList>
            <person name="Hayashi M.A.F."/>
            <person name="Queiroz G.P."/>
            <person name="Radis-Baptista G."/>
            <person name="Yamane T."/>
            <person name="Camargo A.C.M."/>
        </authorList>
    </citation>
    <scope>NUCLEOTIDE SEQUENCE [MRNA]</scope>
    <source>
        <tissue>Venom gland</tissue>
    </source>
</reference>
<reference key="3">
    <citation type="journal article" date="1993" name="J. Protein Chem.">
        <title>Bothropstoxin-I: amino acid sequence and function.</title>
        <authorList>
            <person name="Cintra A.C.O."/>
            <person name="Marangoni S."/>
            <person name="Oliveira B."/>
            <person name="Giglio J.R."/>
        </authorList>
    </citation>
    <scope>PROTEIN SEQUENCE OF 17-137</scope>
    <source>
        <tissue>Venom</tissue>
    </source>
</reference>
<reference key="4">
    <citation type="journal article" date="1995" name="Gene">
        <title>Sequence of a cDNA encoding bothropstoxin I, a myotoxin from the venom of Bothrops jararacussu.</title>
        <authorList>
            <person name="Ward R.J."/>
            <person name="Monesi N."/>
            <person name="Arni R.K."/>
            <person name="Larson R.E."/>
            <person name="Paco-Larson M.L."/>
        </authorList>
    </citation>
    <scope>NUCLEOTIDE SEQUENCE [MRNA] OF 17-137</scope>
    <source>
        <tissue>Venom gland</tissue>
    </source>
</reference>
<reference key="5">
    <citation type="submission" date="2004-09" db="EMBL/GenBank/DDBJ databases">
        <authorList>
            <person name="Ward R.J."/>
        </authorList>
    </citation>
    <scope>SEQUENCE REVISION</scope>
</reference>
<reference key="6">
    <citation type="journal article" date="2001" name="J. Protein Chem.">
        <title>Assignment of the disulfide bridges in bothropstoxin-I, a myonecrotic Lys49 PLA2 homolog from Bothrops jararacussu snake venom.</title>
        <authorList>
            <person name="Cintra A.C.O."/>
            <person name="Sampaio S.V."/>
            <person name="Raghuvir A.K."/>
            <person name="Giglio J.R."/>
        </authorList>
    </citation>
    <scope>PROTEIN SEQUENCE OF 17-137</scope>
    <scope>DISULFIDE BONDS</scope>
    <source>
        <tissue>Venom</tissue>
    </source>
</reference>
<reference key="7">
    <citation type="journal article" date="1988" name="Toxicon">
        <title>Fractionation of Bothrops jararacussu snake venom: partial chemical characterization and biological activity of bothropstoxin.</title>
        <authorList>
            <person name="Homsi-Brandeburgo M.I."/>
            <person name="Queiroz L.S."/>
            <person name="Santo-Neto H."/>
            <person name="Rodrigues-Simioni L."/>
            <person name="Giglio J.R."/>
        </authorList>
    </citation>
    <scope>PROTEIN SEQUENCE OF 17-26</scope>
    <scope>FUNCTION</scope>
    <scope>TOXIC DOSE</scope>
    <scope>SUBCELLULAR LOCATION</scope>
    <source>
        <tissue>Venom</tissue>
    </source>
</reference>
<reference key="8">
    <citation type="journal article" date="2000" name="Biochimie">
        <title>Myotoxic phospholipases A(2) in bothrops snake venoms: effect of chemical modifications on the enzymatic and pharmacological properties of bothropstoxins from Bothrops jararacussu.</title>
        <authorList>
            <person name="Andriao-Escarso S.H."/>
            <person name="Soares A.M."/>
            <person name="Rodrigues V.M."/>
            <person name="Angulo Y."/>
            <person name="Diaz C."/>
            <person name="Lomonte B."/>
            <person name="Gutierrez J.M."/>
            <person name="Giglio J.R."/>
        </authorList>
    </citation>
    <scope>FUNCTION</scope>
    <scope>BIOASSAY</scope>
    <scope>TOXIC DOSE</scope>
    <source>
        <tissue>Venom</tissue>
    </source>
</reference>
<reference key="9">
    <citation type="journal article" date="2002" name="Biochem. J.">
        <title>Active-site mutagenesis of a Lys49-phospholipase A2: biological and membrane-disrupting activities in the absence of catalysis.</title>
        <authorList>
            <person name="Ward R.J."/>
            <person name="Chioato L."/>
            <person name="de Oliveira A.H."/>
            <person name="Ruller R."/>
            <person name="Sa J.M."/>
        </authorList>
    </citation>
    <scope>FUNCTION</scope>
    <scope>BIOASSAY</scope>
    <scope>MUTAGENESIS OF HIS-63; LYS-64 AND LYS-128</scope>
</reference>
<reference key="10">
    <citation type="journal article" date="2002" name="Biochem. J.">
        <title>Distinct sites for myotoxic and membrane-damaging activities in the C-terminal region of a Lys49-phospholipase A2.</title>
        <authorList>
            <person name="Chioato L."/>
            <person name="De Oliveira A.H."/>
            <person name="Ruller R."/>
            <person name="Sa J.M."/>
            <person name="Ward R.J."/>
        </authorList>
    </citation>
    <scope>FUNCTION</scope>
    <scope>BIOASSAY</scope>
    <scope>MUTAGENESIS OF LYS-121; LYS-122; TYR-123; ARG-124; TYR-125; LYS-128; PHE-130; LYS-132 AND LYS-133</scope>
</reference>
<reference key="11">
    <citation type="journal article" date="2003" name="Toxicon">
        <title>Antagonism of myotoxic and paralyzing activities of bothropstoxin-I by suramin.</title>
        <authorList>
            <person name="de Oliveira M."/>
            <person name="Cavalcante W.L."/>
            <person name="Arruda E.Z."/>
            <person name="Melo P.A."/>
            <person name="Dal-Pai Silva M."/>
            <person name="Gallacci M."/>
        </authorList>
    </citation>
    <scope>FUNCTION</scope>
    <scope>ACTIVITY REGULATION</scope>
</reference>
<reference key="12">
    <citation type="journal article" date="2005" name="Int. J. Biol. Macromol.">
        <title>The interaction between heparin and Lys49 phospholipase A2 reveals the natural binding of heparin on the enzyme.</title>
        <authorList>
            <person name="Bugs M.R."/>
            <person name="Bortoleto-Bugs R.K."/>
            <person name="Cornelio M.L."/>
        </authorList>
    </citation>
    <scope>SUBUNIT</scope>
    <scope>PROBABLE ACTIVITY REGULATION</scope>
</reference>
<reference key="13">
    <citation type="journal article" date="2007" name="Biochim. Biophys. Acta">
        <title>Mapping of the structural determinants of artificial and biological membrane damaging activities of a Lys49 phospholipase A2 by scanning alanine mutagenesis.</title>
        <authorList>
            <person name="Chioato L."/>
            <person name="Aragao E.A."/>
            <person name="Lopes Ferreira T."/>
            <person name="Medeiros A.I."/>
            <person name="Faccioli L.H."/>
            <person name="Ward R.J."/>
        </authorList>
    </citation>
    <scope>FUNCTION</scope>
    <scope>BIOASSAY</scope>
    <scope>MUTAGENESIS OF LYS-23; LYS-31; LYS-51; PRO-52; LYS-53; ASP-54; ARG-58; TYR-61; HIS-63; LYS-68; LYS-69; THR-71; LYS-87; GLU-93; LYS-99; LYS-106; THR-118; ASN-120; LYS-121; LYS-122; TYR-123; ARG-124; TYR-125; HIS-126; LEU-127; LYS-128; PHE-130; LYS-132 AND LYS-133</scope>
</reference>
<reference key="14">
    <citation type="journal article" date="2008" name="Toxicon">
        <title>Permeabilization of E. coli K12 inner and outer membranes by bothropstoxin-I, a Lys49 phospholipase A2 from Bothrops jararacussu.</title>
        <authorList>
            <person name="Aragao E.A."/>
            <person name="Chioato L."/>
            <person name="Ward R.J."/>
        </authorList>
    </citation>
    <scope>FUNCTION</scope>
    <scope>MUTAGENESIS OF HIS-63; LYS-121; TYR-123; ARG-124; LYS-128; PHE-130 AND LYS-133</scope>
    <source>
        <tissue>Venom</tissue>
    </source>
</reference>
<reference key="15">
    <citation type="journal article" date="2019" name="Toxins">
        <title>Inflammasome activation induced by a snake venom Lys49-phospholipase A2 homologue.</title>
        <authorList>
            <person name="Boeno C.N."/>
            <person name="Paloschi M.V."/>
            <person name="Lopes J.A."/>
            <person name="Pires W.L."/>
            <person name="Setubal S.D.S."/>
            <person name="Evangelista J.R."/>
            <person name="Soares A.M."/>
            <person name="Zuliani J.P."/>
        </authorList>
    </citation>
    <scope>FUNCTION</scope>
</reference>
<reference evidence="31" key="16">
    <citation type="journal article" date="2007" name="Toxicon">
        <title>Interfacial surface charge and free accessibility to the PLA2-active site-like region are essential requirements for the activity of Lys49 PLA2 homologues.</title>
        <authorList>
            <person name="Murakami M.T."/>
            <person name="Vicoti M.M."/>
            <person name="Abrego J.R.B."/>
            <person name="Lourenzoni M.R."/>
            <person name="Cintra A.C.O."/>
            <person name="Arruda E.Z."/>
            <person name="Tomaz M.A."/>
            <person name="Melo P.A."/>
            <person name="Arni R.K."/>
        </authorList>
    </citation>
    <scope>X-RAY CRYSTALLOGRAPHY (1.9 ANGSTROMS) OF 17-137</scope>
    <scope>FUNCTION</scope>
    <scope>SUBUNIT</scope>
    <scope>DISULFIDE BONDS</scope>
    <source>
        <tissue>Venom</tissue>
    </source>
</reference>
<reference evidence="32" key="17">
    <citation type="journal article" date="2009" name="J. Struct. Biol.">
        <title>Comparative structural studies on Lys49-phospholipases A(2) from Bothrops genus reveal their myotoxic site.</title>
        <authorList>
            <person name="dos Santos J.I."/>
            <person name="Soares A.M."/>
            <person name="Fontes M.R."/>
        </authorList>
    </citation>
    <scope>X-RAY CRYSTALLOGRAPHY (1.83 ANGSTROMS) OF 17-137 IN COMPLEX WITH ALPHA-TOCOPHEROL</scope>
    <scope>SUBUNIT</scope>
    <scope>DISULFIDE BONDS</scope>
</reference>
<reference evidence="33 34 35 36 37" key="18">
    <citation type="journal article" date="2010" name="J. Struct. Biol.">
        <title>Comparison between apo and complexed structures of bothropstoxin-I reveals the role of Lys122 and Ca(2+)-binding loop region for the catalytically inactive Lys49-PLA(2)s.</title>
        <authorList>
            <person name="Fernandes C.A."/>
            <person name="Marchi-Salvador D.P."/>
            <person name="Salvador G.M."/>
            <person name="Silva M.C."/>
            <person name="Costa T.R."/>
            <person name="Soares A.M."/>
            <person name="Fontes M.R."/>
        </authorList>
    </citation>
    <scope>X-RAY CRYSTALLOGRAPHY (1.48 ANGSTROMS) OF 17-137 IN COMPLEX WITH THE PLA2 INHIBITOR BROMOPHENACYL BROMIDE (BPB)</scope>
    <scope>SUBUNIT</scope>
    <scope>DISULFIDE BONDS</scope>
    <source>
        <tissue>Venom</tissue>
    </source>
</reference>
<reference evidence="38" key="19">
    <citation type="journal article" date="2017" name="Biochim. Biophys. Acta">
        <title>Functional and structural studies of a phospholipase A2-like protein complexed to zinc ions: insights on its myotoxicity and inhibition mechanism.</title>
        <authorList>
            <person name="Borges R.J."/>
            <person name="Cardoso F.F."/>
            <person name="Fernandes C.A.H."/>
            <person name="Dreyer T.R."/>
            <person name="de Moraes D.S."/>
            <person name="Floriano R.S."/>
            <person name="Rodrigues-Simioni L."/>
            <person name="Fontes M.R.M."/>
        </authorList>
    </citation>
    <scope>X-RAY CRYSTALLOGRAPHY (2.16 ANGSTROMS) OF 17-137 IN COMPLEX WITH ZINC IONS</scope>
    <scope>ACTIVITY REGULATION</scope>
    <scope>SUBUNIT</scope>
    <source>
        <tissue>Venom</tissue>
    </source>
</reference>
<reference evidence="39" key="20">
    <citation type="journal article" date="2018" name="Biochim. Biophys. Acta">
        <title>Structural basis of phospholipase A2-like myotoxin inhibition by chicoric acid, a novel potent inhibitor of ophidian toxins.</title>
        <authorList>
            <person name="Cardoso F.F."/>
            <person name="Borges R.J."/>
            <person name="Dreyer T.R."/>
            <person name="Salvador G.H.M."/>
            <person name="Cavalcante W.L.G."/>
            <person name="Pai M.D."/>
            <person name="Gallacci M."/>
            <person name="Fontes M.R.M."/>
        </authorList>
    </citation>
    <scope>X-RAY CRYSTALLOGRAPHY (1.93 ANGSTROMS) OF 17-137 IN COMPLEX WITH CHICORIC ACID</scope>
    <scope>ACTIVITY REGULATION</scope>
</reference>
<dbReference type="EMBL" id="AY185200">
    <property type="protein sequence ID" value="AAO27453.1"/>
    <property type="molecule type" value="mRNA"/>
</dbReference>
<dbReference type="EMBL" id="AY299391">
    <property type="protein sequence ID" value="AAP57527.1"/>
    <property type="molecule type" value="mRNA"/>
</dbReference>
<dbReference type="EMBL" id="X78599">
    <property type="protein sequence ID" value="CAA55334.2"/>
    <property type="molecule type" value="mRNA"/>
</dbReference>
<dbReference type="PIR" id="A30823">
    <property type="entry name" value="A30823"/>
</dbReference>
<dbReference type="PIR" id="PC4024">
    <property type="entry name" value="PC4024"/>
</dbReference>
<dbReference type="PDB" id="2H8I">
    <property type="method" value="X-ray"/>
    <property type="resolution" value="1.90 A"/>
    <property type="chains" value="A/B=17-137"/>
</dbReference>
<dbReference type="PDB" id="3CXI">
    <property type="method" value="X-ray"/>
    <property type="resolution" value="1.83 A"/>
    <property type="chains" value="A/B=17-137"/>
</dbReference>
<dbReference type="PDB" id="3HZD">
    <property type="method" value="X-ray"/>
    <property type="resolution" value="1.91 A"/>
    <property type="chains" value="A/B=17-137"/>
</dbReference>
<dbReference type="PDB" id="3HZW">
    <property type="method" value="X-ray"/>
    <property type="resolution" value="2.28 A"/>
    <property type="chains" value="A/B=17-127"/>
</dbReference>
<dbReference type="PDB" id="3I03">
    <property type="method" value="X-ray"/>
    <property type="resolution" value="1.48 A"/>
    <property type="chains" value="A=17-137"/>
</dbReference>
<dbReference type="PDB" id="3I3H">
    <property type="method" value="X-ray"/>
    <property type="resolution" value="2.17 A"/>
    <property type="chains" value="A/B=17-137"/>
</dbReference>
<dbReference type="PDB" id="3I3I">
    <property type="method" value="X-ray"/>
    <property type="resolution" value="1.82 A"/>
    <property type="chains" value="A=17-137"/>
</dbReference>
<dbReference type="PDB" id="3IQ3">
    <property type="method" value="X-ray"/>
    <property type="resolution" value="1.55 A"/>
    <property type="chains" value="A/B=17-137"/>
</dbReference>
<dbReference type="PDB" id="4WTB">
    <property type="method" value="X-ray"/>
    <property type="resolution" value="2.16 A"/>
    <property type="chains" value="A/B=17-137"/>
</dbReference>
<dbReference type="PDB" id="6DIK">
    <property type="method" value="X-ray"/>
    <property type="resolution" value="1.93 A"/>
    <property type="chains" value="A/B=17-137"/>
</dbReference>
<dbReference type="PDB" id="7ROX">
    <property type="method" value="X-ray"/>
    <property type="resolution" value="2.10 A"/>
    <property type="chains" value="A/B=17-137"/>
</dbReference>
<dbReference type="PDBsum" id="2H8I"/>
<dbReference type="PDBsum" id="3CXI"/>
<dbReference type="PDBsum" id="3HZD"/>
<dbReference type="PDBsum" id="3HZW"/>
<dbReference type="PDBsum" id="3I03"/>
<dbReference type="PDBsum" id="3I3H"/>
<dbReference type="PDBsum" id="3I3I"/>
<dbReference type="PDBsum" id="3IQ3"/>
<dbReference type="PDBsum" id="4WTB"/>
<dbReference type="PDBsum" id="6DIK"/>
<dbReference type="PDBsum" id="7ROX"/>
<dbReference type="SMR" id="Q90249"/>
<dbReference type="ABCD" id="Q90249">
    <property type="antibodies" value="12 sequenced antibodies"/>
</dbReference>
<dbReference type="EvolutionaryTrace" id="Q90249"/>
<dbReference type="GO" id="GO:0005576">
    <property type="term" value="C:extracellular region"/>
    <property type="evidence" value="ECO:0007669"/>
    <property type="project" value="UniProtKB-SubCell"/>
</dbReference>
<dbReference type="GO" id="GO:0005509">
    <property type="term" value="F:calcium ion binding"/>
    <property type="evidence" value="ECO:0007669"/>
    <property type="project" value="InterPro"/>
</dbReference>
<dbReference type="GO" id="GO:0047498">
    <property type="term" value="F:calcium-dependent phospholipase A2 activity"/>
    <property type="evidence" value="ECO:0007669"/>
    <property type="project" value="TreeGrafter"/>
</dbReference>
<dbReference type="GO" id="GO:0008201">
    <property type="term" value="F:heparin binding"/>
    <property type="evidence" value="ECO:0007669"/>
    <property type="project" value="UniProtKB-KW"/>
</dbReference>
<dbReference type="GO" id="GO:0005543">
    <property type="term" value="F:phospholipid binding"/>
    <property type="evidence" value="ECO:0007669"/>
    <property type="project" value="TreeGrafter"/>
</dbReference>
<dbReference type="GO" id="GO:0090729">
    <property type="term" value="F:toxin activity"/>
    <property type="evidence" value="ECO:0007669"/>
    <property type="project" value="UniProtKB-KW"/>
</dbReference>
<dbReference type="GO" id="GO:0050482">
    <property type="term" value="P:arachidonate secretion"/>
    <property type="evidence" value="ECO:0007669"/>
    <property type="project" value="InterPro"/>
</dbReference>
<dbReference type="GO" id="GO:0042742">
    <property type="term" value="P:defense response to bacterium"/>
    <property type="evidence" value="ECO:0007669"/>
    <property type="project" value="UniProtKB-KW"/>
</dbReference>
<dbReference type="GO" id="GO:0016042">
    <property type="term" value="P:lipid catabolic process"/>
    <property type="evidence" value="ECO:0007669"/>
    <property type="project" value="InterPro"/>
</dbReference>
<dbReference type="GO" id="GO:0042130">
    <property type="term" value="P:negative regulation of T cell proliferation"/>
    <property type="evidence" value="ECO:0007669"/>
    <property type="project" value="TreeGrafter"/>
</dbReference>
<dbReference type="GO" id="GO:0006644">
    <property type="term" value="P:phospholipid metabolic process"/>
    <property type="evidence" value="ECO:0007669"/>
    <property type="project" value="InterPro"/>
</dbReference>
<dbReference type="CDD" id="cd00125">
    <property type="entry name" value="PLA2c"/>
    <property type="match status" value="1"/>
</dbReference>
<dbReference type="FunFam" id="1.20.90.10:FF:000001">
    <property type="entry name" value="Basic phospholipase A2 homolog"/>
    <property type="match status" value="1"/>
</dbReference>
<dbReference type="Gene3D" id="1.20.90.10">
    <property type="entry name" value="Phospholipase A2 domain"/>
    <property type="match status" value="1"/>
</dbReference>
<dbReference type="InterPro" id="IPR001211">
    <property type="entry name" value="PLipase_A2"/>
</dbReference>
<dbReference type="InterPro" id="IPR033112">
    <property type="entry name" value="PLipase_A2_Asp_AS"/>
</dbReference>
<dbReference type="InterPro" id="IPR016090">
    <property type="entry name" value="PLipase_A2_dom"/>
</dbReference>
<dbReference type="InterPro" id="IPR036444">
    <property type="entry name" value="PLipase_A2_dom_sf"/>
</dbReference>
<dbReference type="InterPro" id="IPR033113">
    <property type="entry name" value="PLipase_A2_His_AS"/>
</dbReference>
<dbReference type="PANTHER" id="PTHR11716">
    <property type="entry name" value="PHOSPHOLIPASE A2 FAMILY MEMBER"/>
    <property type="match status" value="1"/>
</dbReference>
<dbReference type="PANTHER" id="PTHR11716:SF9">
    <property type="entry name" value="PHOSPHOLIPASE A2, MEMBRANE ASSOCIATED"/>
    <property type="match status" value="1"/>
</dbReference>
<dbReference type="Pfam" id="PF00068">
    <property type="entry name" value="Phospholip_A2_1"/>
    <property type="match status" value="1"/>
</dbReference>
<dbReference type="PRINTS" id="PR00389">
    <property type="entry name" value="PHPHLIPASEA2"/>
</dbReference>
<dbReference type="SMART" id="SM00085">
    <property type="entry name" value="PA2c"/>
    <property type="match status" value="1"/>
</dbReference>
<dbReference type="SUPFAM" id="SSF48619">
    <property type="entry name" value="Phospholipase A2, PLA2"/>
    <property type="match status" value="1"/>
</dbReference>
<dbReference type="PROSITE" id="PS00119">
    <property type="entry name" value="PA2_ASP"/>
    <property type="match status" value="1"/>
</dbReference>
<dbReference type="PROSITE" id="PS00118">
    <property type="entry name" value="PA2_HIS"/>
    <property type="match status" value="1"/>
</dbReference>
<keyword id="KW-0002">3D-structure</keyword>
<keyword id="KW-0044">Antibiotic</keyword>
<keyword id="KW-0929">Antimicrobial</keyword>
<keyword id="KW-0903">Direct protein sequencing</keyword>
<keyword id="KW-1015">Disulfide bond</keyword>
<keyword id="KW-0358">Heparin-binding</keyword>
<keyword id="KW-0959">Myotoxin</keyword>
<keyword id="KW-0964">Secreted</keyword>
<keyword id="KW-0732">Signal</keyword>
<keyword id="KW-0800">Toxin</keyword>
<accession>Q90249</accession>
<accession>Q7LZ25</accession>
<accession>Q804D7</accession>
<proteinExistence type="evidence at protein level"/>
<name>PA2H1_BOTJR</name>
<evidence type="ECO:0000250" key="1">
    <source>
        <dbReference type="UniProtKB" id="I6L8L6"/>
    </source>
</evidence>
<evidence type="ECO:0000250" key="2">
    <source>
        <dbReference type="UniProtKB" id="P24605"/>
    </source>
</evidence>
<evidence type="ECO:0000269" key="3">
    <source>
    </source>
</evidence>
<evidence type="ECO:0000269" key="4">
    <source>
    </source>
</evidence>
<evidence type="ECO:0000269" key="5">
    <source>
    </source>
</evidence>
<evidence type="ECO:0000269" key="6">
    <source>
    </source>
</evidence>
<evidence type="ECO:0000269" key="7">
    <source>
    </source>
</evidence>
<evidence type="ECO:0000269" key="8">
    <source>
    </source>
</evidence>
<evidence type="ECO:0000269" key="9">
    <source>
    </source>
</evidence>
<evidence type="ECO:0000269" key="10">
    <source>
    </source>
</evidence>
<evidence type="ECO:0000269" key="11">
    <source>
    </source>
</evidence>
<evidence type="ECO:0000269" key="12">
    <source>
    </source>
</evidence>
<evidence type="ECO:0000269" key="13">
    <source>
    </source>
</evidence>
<evidence type="ECO:0000269" key="14">
    <source>
    </source>
</evidence>
<evidence type="ECO:0000269" key="15">
    <source>
    </source>
</evidence>
<evidence type="ECO:0000269" key="16">
    <source>
    </source>
</evidence>
<evidence type="ECO:0000269" key="17">
    <source>
    </source>
</evidence>
<evidence type="ECO:0000269" key="18">
    <source>
    </source>
</evidence>
<evidence type="ECO:0000303" key="19">
    <source>
    </source>
</evidence>
<evidence type="ECO:0000303" key="20">
    <source>
    </source>
</evidence>
<evidence type="ECO:0000303" key="21">
    <source>
    </source>
</evidence>
<evidence type="ECO:0000303" key="22">
    <source>
    </source>
</evidence>
<evidence type="ECO:0000303" key="23">
    <source>
    </source>
</evidence>
<evidence type="ECO:0000303" key="24">
    <source>
    </source>
</evidence>
<evidence type="ECO:0000303" key="25">
    <source>
    </source>
</evidence>
<evidence type="ECO:0000303" key="26">
    <source>
    </source>
</evidence>
<evidence type="ECO:0000305" key="27"/>
<evidence type="ECO:0000305" key="28">
    <source>
    </source>
</evidence>
<evidence type="ECO:0000305" key="29">
    <source>
    </source>
</evidence>
<evidence type="ECO:0000305" key="30">
    <source>
    </source>
</evidence>
<evidence type="ECO:0000312" key="31">
    <source>
        <dbReference type="PDB" id="2H8I"/>
    </source>
</evidence>
<evidence type="ECO:0000312" key="32">
    <source>
        <dbReference type="PDB" id="3CXI"/>
    </source>
</evidence>
<evidence type="ECO:0000312" key="33">
    <source>
        <dbReference type="PDB" id="3HZD"/>
    </source>
</evidence>
<evidence type="ECO:0000312" key="34">
    <source>
        <dbReference type="PDB" id="3HZW"/>
    </source>
</evidence>
<evidence type="ECO:0000312" key="35">
    <source>
        <dbReference type="PDB" id="3I03"/>
    </source>
</evidence>
<evidence type="ECO:0000312" key="36">
    <source>
        <dbReference type="PDB" id="3I3I"/>
    </source>
</evidence>
<evidence type="ECO:0000312" key="37">
    <source>
        <dbReference type="PDB" id="3IQ3"/>
    </source>
</evidence>
<evidence type="ECO:0000312" key="38">
    <source>
        <dbReference type="PDB" id="4WTB"/>
    </source>
</evidence>
<evidence type="ECO:0000312" key="39">
    <source>
        <dbReference type="PDB" id="6DIK"/>
    </source>
</evidence>
<evidence type="ECO:0007744" key="40">
    <source>
        <dbReference type="PDB" id="2H8I"/>
    </source>
</evidence>
<evidence type="ECO:0007744" key="41">
    <source>
        <dbReference type="PDB" id="3CXI"/>
    </source>
</evidence>
<evidence type="ECO:0007744" key="42">
    <source>
        <dbReference type="PDB" id="3HZD"/>
    </source>
</evidence>
<evidence type="ECO:0007829" key="43">
    <source>
        <dbReference type="PDB" id="3CXI"/>
    </source>
</evidence>
<evidence type="ECO:0007829" key="44">
    <source>
        <dbReference type="PDB" id="3I03"/>
    </source>
</evidence>
<evidence type="ECO:0007829" key="45">
    <source>
        <dbReference type="PDB" id="7ROX"/>
    </source>
</evidence>
<comment type="function">
    <text evidence="1 3 5 6 9 10 11 14 16 17">Snake venom phospholipase A2 homolog that lacks enzymatic activity. Shows local myotoxic activity (PubMed:11018293, PubMed:12079495, PubMed:31906173). Induces inflammation, since it induces edema and leukocytes infiltration (PubMed:11018293, PubMed:31906173). In addition, it induces NLRP3 NLRP3, ASC (PYCARD), caspase-1 (CASP1), and IL-1beta (IL1B) gene expression in the gastrocnemius muscle, showing that it is able to activate NLRP3 inflammasome (PubMed:31906173). It also damages artificial and myoblast membranes by a calcium-independent mechanism, has bactericidal activity, and induces neuromuscular blockade (PubMed:27531710). A model of myotoxic mechanism has been proposed: an apo Lys49-PLA2 is activated by the entrance of a hydrophobic molecule (e.g. fatty acid) at the hydrophobic channel of the protein leading to a reorientation of a monomer (By similarity) (PubMed:27531710). This reorientation causes a transition between 'inactive' to 'active' states, causing alignment of C-terminal and membrane-docking sites (MDoS) side-by-side and putting the membrane-disruption sites (MDiS) in the same plane, exposed to solvent and in a symmetric position for both monomers (By similarity) (PubMed:27531710). The MDoS region stabilizes the toxin on membrane by the interaction of charged residues with phospholipid head groups (By similarity) (PubMed:27531710). Subsequently, the MDiS region destabilizes the membrane with penetration of hydrophobic residues (By similarity) (PubMed:27531710). This insertion causes a disorganization of the membrane, allowing an uncontrolled influx of ions (i.e. calcium and sodium), and eventually triggering irreversible intracellular alterations and cell death (By similarity) (PubMed:27531710).</text>
</comment>
<comment type="activity regulation">
    <text evidence="7 14 15 29">Suramin inhibits both myotoxic and muscle-paralyzing activities (PubMed:14505937). Chicoric acid inhibits myotoxic activity (PubMed:30251662). Zinc ions inhibits the myotoxic activity and the neuromuscular blockade (PubMed:27531710). Heparin inhibits myotoxic activity (PubMed:16197992).</text>
</comment>
<comment type="subunit">
    <text evidence="8 9 12 13 14 15">Homodimer; non-covalently linked (probable alternative/compact dimer conformation in solution) (PubMed:17157889, PubMed:19401234, PubMed:20371382, PubMed:27531710, PubMed:30251662). Binds to heparin (PubMed:16197992).</text>
</comment>
<comment type="subcellular location">
    <subcellularLocation>
        <location evidence="16">Secreted</location>
    </subcellularLocation>
</comment>
<comment type="tissue specificity">
    <text evidence="30">Expressed by the venom gland.</text>
</comment>
<comment type="toxic dose">
    <text evidence="3 16">LD(50) is 7.5-8.5 mg/kg by intraperitoneal injection into mice.</text>
</comment>
<comment type="toxic dose">
    <text evidence="16">LD(50) is 4.8 mg/kg by intravenous injection into mice.</text>
</comment>
<comment type="similarity">
    <text evidence="27">Belongs to the phospholipase A2 family. Group II subfamily. K49 sub-subfamily.</text>
</comment>
<comment type="caution">
    <text evidence="28">Does not bind calcium as one of the calcium-binding sites is lost (Asp-&gt;Lys in position 64, which corresponds to 'Lys-49' in the current nomenclature). However, the hydrolytic activity is not restored by the mutant containing an Asp-64, indicating that other residues play a key role in hydrolytic activity (PubMed:11829743).</text>
</comment>
<organism>
    <name type="scientific">Bothrops jararacussu</name>
    <name type="common">Jararacussu</name>
    <dbReference type="NCBI Taxonomy" id="8726"/>
    <lineage>
        <taxon>Eukaryota</taxon>
        <taxon>Metazoa</taxon>
        <taxon>Chordata</taxon>
        <taxon>Craniata</taxon>
        <taxon>Vertebrata</taxon>
        <taxon>Euteleostomi</taxon>
        <taxon>Lepidosauria</taxon>
        <taxon>Squamata</taxon>
        <taxon>Bifurcata</taxon>
        <taxon>Unidentata</taxon>
        <taxon>Episquamata</taxon>
        <taxon>Toxicofera</taxon>
        <taxon>Serpentes</taxon>
        <taxon>Colubroidea</taxon>
        <taxon>Viperidae</taxon>
        <taxon>Crotalinae</taxon>
        <taxon>Bothrops</taxon>
    </lineage>
</organism>
<sequence length="137" mass="15497">MRTLWIMAVLLVGVEGSLFELGKMILQETGKNPAKSYGAYGCNCGVLGRGKPKDATDRCCYVHKCCYKKLTGCDPKKDRYSYSWKDKTIVCGENNPCLKELCECDKAVAICLRENLGTYNKKYRYHLKPFCKKADPC</sequence>
<protein>
    <recommendedName>
        <fullName evidence="19 20 21 22 23 26">Basic phospholipase A2 homolog bothropstoxin-I</fullName>
        <shortName evidence="25">Bothropstoxin I</shortName>
        <shortName evidence="19 24">BthTx-I</shortName>
        <shortName>BtxtxI</shortName>
        <shortName>svPLA2 homolog</shortName>
    </recommendedName>
    <alternativeName>
        <fullName>BOJU-I</fullName>
    </alternativeName>
    <alternativeName>
        <fullName>Myotoxic phospholipase A2-like</fullName>
    </alternativeName>
    <alternativeName>
        <fullName>Phospholipase A2 homolog 1</fullName>
    </alternativeName>
</protein>
<feature type="signal peptide" evidence="4 16 18">
    <location>
        <begin position="1"/>
        <end position="16"/>
    </location>
</feature>
<feature type="chain" id="PRO_0000161622" description="Basic phospholipase A2 homolog bothropstoxin-I">
    <location>
        <begin position="17"/>
        <end position="137"/>
    </location>
</feature>
<feature type="region of interest" description="Important for membrane-damaging activities in eukaryotes and bacteria; heparin-binding" evidence="2">
    <location>
        <begin position="121"/>
        <end position="133"/>
    </location>
</feature>
<feature type="site" description="Important residue of the cationic membrane-docking site (MDoS)" evidence="1">
    <location>
        <position position="121"/>
    </location>
</feature>
<feature type="site" description="Important residue of the cationic membrane-docking site (MDoS)" evidence="1">
    <location>
        <position position="124"/>
    </location>
</feature>
<feature type="site" description="Hydrophobic membrane-disruption site (MDiS)" evidence="1">
    <location>
        <position position="127"/>
    </location>
</feature>
<feature type="site" description="Cationic membrane-docking site (MDoS)" evidence="1">
    <location>
        <position position="128"/>
    </location>
</feature>
<feature type="site" description="Hydrophobic membrane-disruption site (MDiS)" evidence="1">
    <location>
        <position position="130"/>
    </location>
</feature>
<feature type="site" description="Cationic membrane-docking site (MDoS)" evidence="1">
    <location>
        <position position="133"/>
    </location>
</feature>
<feature type="disulfide bond" evidence="4 9 12 13 40 41 42">
    <location>
        <begin position="42"/>
        <end position="131"/>
    </location>
</feature>
<feature type="disulfide bond" evidence="4 9 12 13 40 41 42">
    <location>
        <begin position="44"/>
        <end position="60"/>
    </location>
</feature>
<feature type="disulfide bond" evidence="4 9 12 13 40 41 42">
    <location>
        <begin position="59"/>
        <end position="111"/>
    </location>
</feature>
<feature type="disulfide bond" evidence="4 9 12 13 40 41 42">
    <location>
        <begin position="65"/>
        <end position="137"/>
    </location>
</feature>
<feature type="disulfide bond" evidence="4 9 12 13 40 41 42">
    <location>
        <begin position="66"/>
        <end position="104"/>
    </location>
</feature>
<feature type="disulfide bond" evidence="4 9 12 13 40 41 42">
    <location>
        <begin position="73"/>
        <end position="97"/>
    </location>
</feature>
<feature type="disulfide bond" evidence="4 9 12 13 40 41 42">
    <location>
        <begin position="91"/>
        <end position="102"/>
    </location>
</feature>
<feature type="sequence variant">
    <original>F</original>
    <variation>L</variation>
    <location>
        <position position="19"/>
    </location>
</feature>
<feature type="sequence variant">
    <original>Y</original>
    <variation>H</variation>
    <location>
        <position position="37"/>
    </location>
</feature>
<feature type="sequence variant">
    <original>P</original>
    <variation>A</variation>
    <location>
        <position position="136"/>
    </location>
</feature>
<feature type="mutagenesis site" description="No change in myotoxicity when injected into mice. No change in myoblast membrane permeabilizing activities. Important decrease in bactericidal activity. No change in calcium-independent damaging activity against EYPC:DPPG liposomes. Decrease in calcium-independent damaging activity against EYPC:DMPA liposomes." evidence="10">
    <original>K</original>
    <variation>A</variation>
    <location>
        <position position="23"/>
    </location>
</feature>
<feature type="mutagenesis site" description="No change in myotoxicity when injected into mice. No change in myoblast membrane permeabilizing activities. No change in bactericidal activity. No change in calcium-independent damaging activity against EYPC:DPPG liposomes. Decrease in calcium-independent damaging activity against EYPC:DMPA liposomes." evidence="10">
    <original>K</original>
    <variation>A</variation>
    <location>
        <position position="31"/>
    </location>
</feature>
<feature type="mutagenesis site" description="No change in myotoxicity when injected into mice. No change in myoblast membrane permeabilizing activities. No change in bactericidal activity. Decrease in calcium-independent damaging activity against EYPC:DPPG liposomes. Decrease in calcium-independent damaging activity against EYPC:DMPA liposomes." evidence="10">
    <original>K</original>
    <variation>A</variation>
    <location>
        <position position="51"/>
    </location>
</feature>
<feature type="mutagenesis site" description="Important decrease in myotoxicity when injected into mice. Decrease in membrane permeabilization of cultured myoblasts. No change in bactericidal activity. No change in calcium-independent damaging activity against EYPC:DPPG liposomes. Increase in calcium-independent damaging activity against EYPC:DMPA liposomes." evidence="10">
    <original>P</original>
    <variation>A</variation>
    <location>
        <position position="52"/>
    </location>
</feature>
<feature type="mutagenesis site" description="No change in myotoxicity when injected into mice. Decrease in myoblast membrane permeabilizing activities. No change in bactericidal activity. Important decrease in calcium-independent damaging activity against EYPC:DPPG liposomes. Important decrease in calcium-independent damaging activity against EYPC:DMPA liposomes." evidence="10">
    <original>K</original>
    <variation>A</variation>
    <location>
        <position position="53"/>
    </location>
</feature>
<feature type="mutagenesis site" description="No change in myoblast membrane permeabilizing activities." evidence="10">
    <original>D</original>
    <variation>A</variation>
    <location>
        <position position="54"/>
    </location>
</feature>
<feature type="mutagenesis site" description="No change in myotoxicity when injected into mice. No change in myoblast membrane permeabilizing activities. No change in bactericidal activity. Decrease in calcium-independent damaging activity against EYPC:DPPG liposomes. Decrease in calcium-independent damaging activity against EYPC:DMPA liposomes." evidence="10">
    <original>R</original>
    <variation>A</variation>
    <location>
        <position position="58"/>
    </location>
</feature>
<feature type="mutagenesis site" description="No change in myotoxicity when injected into mice. No change in myoblast membrane permeabilizing activities. No change in bactericidal activity. Decrease in calcium-independent damaging activity against EYPC:DPPG liposomes. No change in calcium-independent damaging activity against EYPC:DMPA liposomes." evidence="10">
    <original>Y</original>
    <variation>A</variation>
    <location>
        <position position="61"/>
    </location>
</feature>
<feature type="mutagenesis site" description="No change in myotoxic activities. No change in myoblast membrane permeabilizing activities. No change in bactericidal activity. No change in calcium-independent membrane-damaging activities. Shows no hydrolytic activity." evidence="5 10 11">
    <original>H</original>
    <variation>Q</variation>
    <location>
        <position position="63"/>
    </location>
</feature>
<feature type="mutagenesis site" description="No change in myotoxic activities. No change in calcium-independent membrane-damaging and myotoxic activities. Shows no hydrolytic activity." evidence="5">
    <original>K</original>
    <variation>D</variation>
    <location>
        <position position="64"/>
    </location>
</feature>
<feature type="mutagenesis site" description="No change in myotoxicity when injected into mice. No change in myoblast membrane permeabilizing activities. No change in bactericidal activity. Decrease in calcium-independent damaging activity against EYPC:DPPG liposomes. Decrease in calcium-independent damaging activity against EYPC:DMPA liposomes." evidence="10">
    <original>K</original>
    <variation>A</variation>
    <location>
        <position position="68"/>
    </location>
</feature>
<feature type="mutagenesis site" description="Increase in myotoxicity when injected into mice. Increase in myoblast membrane permeabilizing activities. No change in bactericidal activity. No change in calcium-independent damaging activity against EYPC:DPPG liposomes. Decrease in calcium-independent damaging activity against EYPC:DMPA liposomes." evidence="10">
    <original>K</original>
    <variation>A</variation>
    <location>
        <position position="69"/>
    </location>
</feature>
<feature type="mutagenesis site" description="No change in myotoxicity when injected into mice. No change in myoblast membrane permeabilizing activities. No change in bactericidal activity. No change in calcium-independent damaging activity against EYPC:DPPG liposomes. No change in calcium-independent damaging activity against EYPC:DMPA liposomes." evidence="10">
    <original>T</original>
    <variation>TKR</variation>
    <location>
        <position position="71"/>
    </location>
</feature>
<feature type="mutagenesis site" description="No change in myotoxicity when injected into mice. No change in myoblast membrane permeabilizing activities. No change in bactericidal activity. No change in calcium-independent damaging activity against EYPC:DPPG liposomes. Decrease in calcium-independent damaging activity against EYPC:DMPA liposomes." evidence="10">
    <original>K</original>
    <variation>A</variation>
    <location>
        <position position="87"/>
    </location>
</feature>
<feature type="mutagenesis site" description="No change in myotoxicity when injected into mice. Important decrease in bactericidal activity. No change in calcium-independent damaging activity against EYPC:DPPG liposomes. No change in calcium-independent damaging activity against EYPC:DMPA liposomes." evidence="10">
    <original>E</original>
    <variation>G</variation>
    <location>
        <position position="93"/>
    </location>
</feature>
<feature type="mutagenesis site" description="No change in myotoxicity when injected into mice. No change in myoblast membrane permeabilizing activities. No change in bactericidal activity. No change in calcium-independent damaging activity against EYPC:DPPG liposomes. No change in calcium-independent damaging activity against EYPC:DMPA liposomes." evidence="10">
    <original>K</original>
    <variation>A</variation>
    <location>
        <position position="99"/>
    </location>
</feature>
<feature type="mutagenesis site" description="Increase in myotoxicity when injected into mice. No change in myoblast membrane permeabilizing activities. Decrease in bactericidal activity. No change in calcium-independent damaging activity against EYPC:DPPG liposomes. Decrease in calcium-independent damaging activity against EYPC:DMPA liposomes." evidence="10">
    <original>K</original>
    <variation>A</variation>
    <location>
        <position position="106"/>
    </location>
</feature>
<feature type="mutagenesis site" description="No change in myoblast membrane permeabilizing activities. No change in calcium-independent damaging activity against EYPC:DPPG liposomes. No change in calcium-independent damaging activity against EYPC:DMPA liposomes." evidence="10">
    <original>T</original>
    <variation>A</variation>
    <location>
        <position position="118"/>
    </location>
</feature>
<feature type="mutagenesis site" description="No change in myotoxicity when injected into mice. Increase in myoblast membrane permeabilizing activities. No change in bactericidal activity. No change in calcium-independent damaging activity against EYPC:DPPG liposomes. No change in calcium-independent damaging activity against EYPC:DMPA liposomes." evidence="10">
    <original>N</original>
    <variation>A</variation>
    <location>
        <position position="120"/>
    </location>
</feature>
<feature type="mutagenesis site" description="No change in myotoxicity when injected into mice. Decrease in myoblast membrane permeabilizing activities. Important decrease in bactericidal activity. Important decrease in calcium-independent damaging activity against EYPC:DPPG liposomes. Important decrease in calcium-independent damaging activity against EYPC:DMPA liposomes." evidence="6 10 11">
    <original>K</original>
    <variation>A</variation>
    <location>
        <position position="121"/>
    </location>
</feature>
<feature type="mutagenesis site" description="No change in myotoxicity when injected into mice. Decrease in myoblast membrane permeabilizing activities. Decrease in bactericidal activity. Important decrease in calcium-independent damaging activity against EYPC:DPPG liposomes. Decrease in calcium-independent damaging activity against EYPC:DMPA liposomes." evidence="6 10">
    <original>K</original>
    <variation>A</variation>
    <location>
        <position position="122"/>
    </location>
</feature>
<feature type="mutagenesis site" description="Important decrease in myotoxicity when injected into mice. Important decrease in myoblast membrane permeabilizing activities. Important decrease in bactericidal activity. Decrease in calcium-independent damaging activity against EYPC:DPPG liposomes. Decrease in calcium-independent damaging activity against EYPC:DMPA liposomes." evidence="6 10 11">
    <original>Y</original>
    <variation>A</variation>
    <location>
        <position position="123"/>
    </location>
</feature>
<feature type="mutagenesis site" description="No change (PubMed:17346668) or important decrease (PubMed:12079495) in myotoxicity when injected into mice. No change in myoblast membrane permeabilizing activities. Decrease in bactericidal activity. No change in calcium-independent damaging activity against EYPC:DPPG liposomes. Important increase in calcium-independent damaging activity against EYPC:DMPA liposomes." evidence="6 10 11">
    <original>Y</original>
    <variation>W</variation>
    <location>
        <position position="123"/>
    </location>
</feature>
<feature type="mutagenesis site" description="Important decrease in myotoxicity when injected into mice. Decrease in myoblast membrane permeabilizing activities. Important decrease in bactericidal activity. Important decrease in calcium-independent damaging activity against EYPC:DPPG liposomes. No change in calcium-independent damaging activity against EYPC:DMPA liposomes." evidence="6 10 11">
    <original>R</original>
    <variation>A</variation>
    <location>
        <position position="124"/>
    </location>
</feature>
<feature type="mutagenesis site" description="Important decrease in myotoxicity when injected into mice. Decrease in myoblast membrane permeabilizing activities. Decrease in bactericidal activity. Important decrease in calcium-independent damaging activity against EYPC:DPPG liposomes. Important decrease in calcium-independent damaging activity against EYPC:DMPA liposomes." evidence="6 10">
    <original>Y</original>
    <variation>A</variation>
    <location>
        <position position="125"/>
    </location>
</feature>
<feature type="mutagenesis site" description="No change in myotoxicity when injected into mice. No change in myoblast membrane permeabilizing activities. Decrease in bactericidal activity. No change in calcium-independent damaging activity against EYPC:DPPG liposomes. No change in calcium-independent damaging activity against EYPC:DMPA liposomes." evidence="6 10">
    <original>Y</original>
    <variation>W</variation>
    <location>
        <position position="125"/>
    </location>
</feature>
<feature type="mutagenesis site" description="No change in myotoxicity when injected into mice. No change in myoblast membrane permeabilizing activities. Important decrease in bactericidal activity. Decrease in calcium-independent damaging activity against EYPC:DPPG liposomes. Decrease in calcium-independent damaging activity against EYPC:DMPA liposomes." evidence="10">
    <original>H</original>
    <variation>A</variation>
    <location>
        <position position="126"/>
    </location>
</feature>
<feature type="mutagenesis site" description="No change in myotoxicity when injected into mice. No change in myoblast membrane permeabilizing activities. Decrease in bactericidal activity. Important decrease in calcium-independent damaging activity against EYPC:DPPG liposomes. Important decrease in calcium-independent damaging activity against EYPC:DMPA liposomes." evidence="10">
    <original>L</original>
    <variation>A</variation>
    <location>
        <position position="127"/>
    </location>
</feature>
<feature type="mutagenesis site" description="Important decrease in myotoxicity when injected into mice. Important decrease in myoblast membrane permeabilizing activities. Important decrease in bactericidal activity. Important decrease in calcium-independent damaging activity against EYPC:DPPG liposomes. Important decrease in calcium-independent damaging activity against EYPC:DMPA liposomes. Shows no hydrolytic activity." evidence="5 6 10 11">
    <original>K</original>
    <variation>A</variation>
    <location>
        <position position="128"/>
    </location>
</feature>
<feature type="mutagenesis site" description="Important decrease in myotoxicity when injected into mice. Decrease in myoblast membrane permeabilizing activities. Decrease in bactericidal activity. Important decrease in calcium-independent damaging activity against EYPC:DPPG liposomes. Important decrease in calcium-independent damaging activity against EYPC:DMPA liposomes." evidence="6 10 11">
    <original>F</original>
    <variation>A</variation>
    <location>
        <position position="130"/>
    </location>
</feature>
<feature type="mutagenesis site" description="No change in myotoxicity when injected into mice. No change in myoblast membrane permeabilizing activities. Decrease in bactericidal activity. No change in calcium-independent damaging activity against EYPC:DPPG liposomes. Decrease (PubMed:17346668) or important decrease (PubMed:12079495) in calcium-independent damaging activity against EYPC:DMPA liposomes." evidence="6 10 11">
    <original>F</original>
    <variation>W</variation>
    <location>
        <position position="130"/>
    </location>
</feature>
<feature type="mutagenesis site" description="No change in myotoxicity when injected into mice. Important decrease in calcium-independent damaging activity against EYPC:DPPG liposomes. No change in calcium-independent damaging activity against EYPC:DMPA liposomes." evidence="6 10">
    <original>K</original>
    <variation>A</variation>
    <location>
        <position position="132"/>
    </location>
</feature>
<feature type="mutagenesis site" description="No change in myotoxicity when injected into mice. No change in myoblast membrane permeabilizing activities. Decrease in bactericidal activity. No change in calcium-independent damaging activity against EYPC:DPPG liposomes. No change in calcium-independent damaging activity against EYPC:DMPA liposomes." evidence="6 10 11">
    <original>K</original>
    <variation>A</variation>
    <location>
        <position position="133"/>
    </location>
</feature>
<feature type="sequence conflict" description="In Ref. 7; AA sequence." evidence="27" ref="7">
    <original>K</original>
    <variation>H</variation>
    <location>
        <position position="23"/>
    </location>
</feature>
<feature type="sequence conflict" description="In Ref. 3; AA sequence." evidence="27" ref="3">
    <original>D</original>
    <variation>N</variation>
    <location>
        <position position="74"/>
    </location>
</feature>
<feature type="helix" evidence="44">
    <location>
        <begin position="18"/>
        <end position="29"/>
    </location>
</feature>
<feature type="helix" evidence="44">
    <location>
        <begin position="33"/>
        <end position="37"/>
    </location>
</feature>
<feature type="strand" evidence="43">
    <location>
        <begin position="38"/>
        <end position="40"/>
    </location>
</feature>
<feature type="turn" evidence="44">
    <location>
        <begin position="41"/>
        <end position="43"/>
    </location>
</feature>
<feature type="strand" evidence="44">
    <location>
        <begin position="44"/>
        <end position="47"/>
    </location>
</feature>
<feature type="helix" evidence="44">
    <location>
        <begin position="55"/>
        <end position="67"/>
    </location>
</feature>
<feature type="turn" evidence="45">
    <location>
        <begin position="69"/>
        <end position="72"/>
    </location>
</feature>
<feature type="turn" evidence="44">
    <location>
        <begin position="75"/>
        <end position="77"/>
    </location>
</feature>
<feature type="strand" evidence="44">
    <location>
        <begin position="82"/>
        <end position="85"/>
    </location>
</feature>
<feature type="strand" evidence="44">
    <location>
        <begin position="88"/>
        <end position="91"/>
    </location>
</feature>
<feature type="helix" evidence="44">
    <location>
        <begin position="96"/>
        <end position="114"/>
    </location>
</feature>
<feature type="helix" evidence="44">
    <location>
        <begin position="116"/>
        <end position="118"/>
    </location>
</feature>
<feature type="helix" evidence="44">
    <location>
        <begin position="121"/>
        <end position="123"/>
    </location>
</feature>
<feature type="helix" evidence="44">
    <location>
        <begin position="128"/>
        <end position="130"/>
    </location>
</feature>